<name>HTPX_CERS1</name>
<gene>
    <name evidence="1" type="primary">htpX</name>
    <name type="ordered locus">Rsph17029_2206</name>
</gene>
<protein>
    <recommendedName>
        <fullName evidence="1">Protease HtpX homolog</fullName>
        <ecNumber evidence="1">3.4.24.-</ecNumber>
    </recommendedName>
</protein>
<proteinExistence type="inferred from homology"/>
<sequence length="300" mass="32047">MGYVRTGILMAVMTALFLGVGALIGGQSGAIIALVIAAGMNLFTFWNSDRAVLSMHGAHEVDPRAAPDLYNMVRGLADRAGMPMPKLYLIETDQPNAFATGRNPENAAVAVTRGLLRALTPEEVAGVVAHELAHIRNRDTLLMTVTATFAGAISMLANFAFFFGGSSNEEGERPMGLVGTLALMFLAPLAAGLVQMAISRSREYEADRIGAEICGRPLWLASALGKIEGLAQRIDNVRAERNPATAHMFIVNPLHAMGHDRLFATHPNTANRIAALRAMAEGAPQASRIPRVAARRGPWN</sequence>
<keyword id="KW-0997">Cell inner membrane</keyword>
<keyword id="KW-1003">Cell membrane</keyword>
<keyword id="KW-0378">Hydrolase</keyword>
<keyword id="KW-0472">Membrane</keyword>
<keyword id="KW-0479">Metal-binding</keyword>
<keyword id="KW-0482">Metalloprotease</keyword>
<keyword id="KW-0645">Protease</keyword>
<keyword id="KW-0812">Transmembrane</keyword>
<keyword id="KW-1133">Transmembrane helix</keyword>
<keyword id="KW-0862">Zinc</keyword>
<reference key="1">
    <citation type="submission" date="2007-02" db="EMBL/GenBank/DDBJ databases">
        <title>Complete sequence of chromosome 1 of Rhodobacter sphaeroides ATCC 17029.</title>
        <authorList>
            <person name="Copeland A."/>
            <person name="Lucas S."/>
            <person name="Lapidus A."/>
            <person name="Barry K."/>
            <person name="Detter J.C."/>
            <person name="Glavina del Rio T."/>
            <person name="Hammon N."/>
            <person name="Israni S."/>
            <person name="Dalin E."/>
            <person name="Tice H."/>
            <person name="Pitluck S."/>
            <person name="Kiss H."/>
            <person name="Brettin T."/>
            <person name="Bruce D."/>
            <person name="Han C."/>
            <person name="Tapia R."/>
            <person name="Gilna P."/>
            <person name="Schmutz J."/>
            <person name="Larimer F."/>
            <person name="Land M."/>
            <person name="Hauser L."/>
            <person name="Kyrpides N."/>
            <person name="Mikhailova N."/>
            <person name="Richardson P."/>
            <person name="Mackenzie C."/>
            <person name="Choudhary M."/>
            <person name="Donohue T.J."/>
            <person name="Kaplan S."/>
        </authorList>
    </citation>
    <scope>NUCLEOTIDE SEQUENCE [LARGE SCALE GENOMIC DNA]</scope>
    <source>
        <strain>ATCC 17029 / ATH 2.4.9</strain>
    </source>
</reference>
<feature type="chain" id="PRO_1000020927" description="Protease HtpX homolog">
    <location>
        <begin position="1"/>
        <end position="300"/>
    </location>
</feature>
<feature type="transmembrane region" description="Helical" evidence="1">
    <location>
        <begin position="7"/>
        <end position="24"/>
    </location>
</feature>
<feature type="transmembrane region" description="Helical" evidence="1">
    <location>
        <begin position="29"/>
        <end position="46"/>
    </location>
</feature>
<feature type="transmembrane region" description="Helical" evidence="1">
    <location>
        <begin position="145"/>
        <end position="165"/>
    </location>
</feature>
<feature type="transmembrane region" description="Helical" evidence="1">
    <location>
        <begin position="174"/>
        <end position="194"/>
    </location>
</feature>
<feature type="active site" evidence="1">
    <location>
        <position position="131"/>
    </location>
</feature>
<feature type="binding site" evidence="1">
    <location>
        <position position="130"/>
    </location>
    <ligand>
        <name>Zn(2+)</name>
        <dbReference type="ChEBI" id="CHEBI:29105"/>
        <note>catalytic</note>
    </ligand>
</feature>
<feature type="binding site" evidence="1">
    <location>
        <position position="134"/>
    </location>
    <ligand>
        <name>Zn(2+)</name>
        <dbReference type="ChEBI" id="CHEBI:29105"/>
        <note>catalytic</note>
    </ligand>
</feature>
<feature type="binding site" evidence="1">
    <location>
        <position position="203"/>
    </location>
    <ligand>
        <name>Zn(2+)</name>
        <dbReference type="ChEBI" id="CHEBI:29105"/>
        <note>catalytic</note>
    </ligand>
</feature>
<organism>
    <name type="scientific">Cereibacter sphaeroides (strain ATCC 17029 / ATH 2.4.9)</name>
    <name type="common">Rhodobacter sphaeroides</name>
    <dbReference type="NCBI Taxonomy" id="349101"/>
    <lineage>
        <taxon>Bacteria</taxon>
        <taxon>Pseudomonadati</taxon>
        <taxon>Pseudomonadota</taxon>
        <taxon>Alphaproteobacteria</taxon>
        <taxon>Rhodobacterales</taxon>
        <taxon>Paracoccaceae</taxon>
        <taxon>Cereibacter</taxon>
    </lineage>
</organism>
<dbReference type="EC" id="3.4.24.-" evidence="1"/>
<dbReference type="EMBL" id="CP000577">
    <property type="protein sequence ID" value="ABN77309.1"/>
    <property type="molecule type" value="Genomic_DNA"/>
</dbReference>
<dbReference type="RefSeq" id="WP_011841514.1">
    <property type="nucleotide sequence ID" value="NC_009049.1"/>
</dbReference>
<dbReference type="KEGG" id="rsh:Rsph17029_2206"/>
<dbReference type="HOGENOM" id="CLU_042266_3_0_5"/>
<dbReference type="GO" id="GO:0005886">
    <property type="term" value="C:plasma membrane"/>
    <property type="evidence" value="ECO:0007669"/>
    <property type="project" value="UniProtKB-SubCell"/>
</dbReference>
<dbReference type="GO" id="GO:0004222">
    <property type="term" value="F:metalloendopeptidase activity"/>
    <property type="evidence" value="ECO:0007669"/>
    <property type="project" value="UniProtKB-UniRule"/>
</dbReference>
<dbReference type="GO" id="GO:0008270">
    <property type="term" value="F:zinc ion binding"/>
    <property type="evidence" value="ECO:0007669"/>
    <property type="project" value="UniProtKB-UniRule"/>
</dbReference>
<dbReference type="GO" id="GO:0006508">
    <property type="term" value="P:proteolysis"/>
    <property type="evidence" value="ECO:0007669"/>
    <property type="project" value="UniProtKB-KW"/>
</dbReference>
<dbReference type="CDD" id="cd07336">
    <property type="entry name" value="M48B_HtpX_like"/>
    <property type="match status" value="1"/>
</dbReference>
<dbReference type="Gene3D" id="3.30.2010.10">
    <property type="entry name" value="Metalloproteases ('zincins'), catalytic domain"/>
    <property type="match status" value="1"/>
</dbReference>
<dbReference type="HAMAP" id="MF_00188">
    <property type="entry name" value="Pept_M48_protease_HtpX"/>
    <property type="match status" value="1"/>
</dbReference>
<dbReference type="InterPro" id="IPR050083">
    <property type="entry name" value="HtpX_protease"/>
</dbReference>
<dbReference type="InterPro" id="IPR022919">
    <property type="entry name" value="Pept_M48_protease_HtpX"/>
</dbReference>
<dbReference type="InterPro" id="IPR001915">
    <property type="entry name" value="Peptidase_M48"/>
</dbReference>
<dbReference type="NCBIfam" id="NF002363">
    <property type="entry name" value="PRK01345.1"/>
    <property type="match status" value="1"/>
</dbReference>
<dbReference type="NCBIfam" id="NF002826">
    <property type="entry name" value="PRK03001.1"/>
    <property type="match status" value="1"/>
</dbReference>
<dbReference type="PANTHER" id="PTHR43221">
    <property type="entry name" value="PROTEASE HTPX"/>
    <property type="match status" value="1"/>
</dbReference>
<dbReference type="PANTHER" id="PTHR43221:SF1">
    <property type="entry name" value="PROTEASE HTPX"/>
    <property type="match status" value="1"/>
</dbReference>
<dbReference type="Pfam" id="PF01435">
    <property type="entry name" value="Peptidase_M48"/>
    <property type="match status" value="1"/>
</dbReference>
<comment type="cofactor">
    <cofactor evidence="1">
        <name>Zn(2+)</name>
        <dbReference type="ChEBI" id="CHEBI:29105"/>
    </cofactor>
    <text evidence="1">Binds 1 zinc ion per subunit.</text>
</comment>
<comment type="subcellular location">
    <subcellularLocation>
        <location evidence="1">Cell inner membrane</location>
        <topology evidence="1">Multi-pass membrane protein</topology>
    </subcellularLocation>
</comment>
<comment type="similarity">
    <text evidence="1">Belongs to the peptidase M48B family.</text>
</comment>
<evidence type="ECO:0000255" key="1">
    <source>
        <dbReference type="HAMAP-Rule" id="MF_00188"/>
    </source>
</evidence>
<accession>A3PLU3</accession>